<proteinExistence type="inferred from homology"/>
<accession>Q7V4J6</accession>
<sequence length="80" mass="8658">MSQEAILEKVRSIVTEQLSVEAGEVKPESSFQNDLGADSLDTVELVMALEEAFDIEIPDEAAEGITTVGDAVKYIEDKQA</sequence>
<comment type="function">
    <text evidence="1">Carrier of the growing fatty acid chain in fatty acid biosynthesis.</text>
</comment>
<comment type="pathway">
    <text evidence="1">Lipid metabolism; fatty acid biosynthesis.</text>
</comment>
<comment type="subcellular location">
    <subcellularLocation>
        <location evidence="1">Cytoplasm</location>
    </subcellularLocation>
</comment>
<comment type="PTM">
    <text evidence="1">4'-phosphopantetheine is transferred from CoA to a specific serine of apo-ACP by AcpS. This modification is essential for activity because fatty acids are bound in thioester linkage to the sulfhydryl of the prosthetic group.</text>
</comment>
<comment type="similarity">
    <text evidence="1">Belongs to the acyl carrier protein (ACP) family.</text>
</comment>
<name>ACP_PROMM</name>
<organism>
    <name type="scientific">Prochlorococcus marinus (strain MIT 9313)</name>
    <dbReference type="NCBI Taxonomy" id="74547"/>
    <lineage>
        <taxon>Bacteria</taxon>
        <taxon>Bacillati</taxon>
        <taxon>Cyanobacteriota</taxon>
        <taxon>Cyanophyceae</taxon>
        <taxon>Synechococcales</taxon>
        <taxon>Prochlorococcaceae</taxon>
        <taxon>Prochlorococcus</taxon>
    </lineage>
</organism>
<protein>
    <recommendedName>
        <fullName evidence="1">Acyl carrier protein</fullName>
        <shortName evidence="1">ACP</shortName>
    </recommendedName>
</protein>
<reference key="1">
    <citation type="journal article" date="2003" name="Nature">
        <title>Genome divergence in two Prochlorococcus ecotypes reflects oceanic niche differentiation.</title>
        <authorList>
            <person name="Rocap G."/>
            <person name="Larimer F.W."/>
            <person name="Lamerdin J.E."/>
            <person name="Malfatti S."/>
            <person name="Chain P."/>
            <person name="Ahlgren N.A."/>
            <person name="Arellano A."/>
            <person name="Coleman M."/>
            <person name="Hauser L."/>
            <person name="Hess W.R."/>
            <person name="Johnson Z.I."/>
            <person name="Land M.L."/>
            <person name="Lindell D."/>
            <person name="Post A.F."/>
            <person name="Regala W."/>
            <person name="Shah M."/>
            <person name="Shaw S.L."/>
            <person name="Steglich C."/>
            <person name="Sullivan M.B."/>
            <person name="Ting C.S."/>
            <person name="Tolonen A."/>
            <person name="Webb E.A."/>
            <person name="Zinser E.R."/>
            <person name="Chisholm S.W."/>
        </authorList>
    </citation>
    <scope>NUCLEOTIDE SEQUENCE [LARGE SCALE GENOMIC DNA]</scope>
    <source>
        <strain>MIT 9313</strain>
    </source>
</reference>
<gene>
    <name evidence="1" type="primary">acpP</name>
    <name type="ordered locus">PMT_1955</name>
</gene>
<feature type="chain" id="PRO_0000180166" description="Acyl carrier protein">
    <location>
        <begin position="1"/>
        <end position="80"/>
    </location>
</feature>
<feature type="domain" description="Carrier" evidence="2">
    <location>
        <begin position="4"/>
        <end position="79"/>
    </location>
</feature>
<feature type="modified residue" description="O-(pantetheine 4'-phosphoryl)serine" evidence="2">
    <location>
        <position position="39"/>
    </location>
</feature>
<keyword id="KW-0963">Cytoplasm</keyword>
<keyword id="KW-0275">Fatty acid biosynthesis</keyword>
<keyword id="KW-0276">Fatty acid metabolism</keyword>
<keyword id="KW-0444">Lipid biosynthesis</keyword>
<keyword id="KW-0443">Lipid metabolism</keyword>
<keyword id="KW-0596">Phosphopantetheine</keyword>
<keyword id="KW-0597">Phosphoprotein</keyword>
<keyword id="KW-1185">Reference proteome</keyword>
<evidence type="ECO:0000255" key="1">
    <source>
        <dbReference type="HAMAP-Rule" id="MF_01217"/>
    </source>
</evidence>
<evidence type="ECO:0000255" key="2">
    <source>
        <dbReference type="PROSITE-ProRule" id="PRU00258"/>
    </source>
</evidence>
<dbReference type="EMBL" id="BX548175">
    <property type="protein sequence ID" value="CAE22129.1"/>
    <property type="molecule type" value="Genomic_DNA"/>
</dbReference>
<dbReference type="RefSeq" id="WP_011131320.1">
    <property type="nucleotide sequence ID" value="NC_005071.1"/>
</dbReference>
<dbReference type="SMR" id="Q7V4J6"/>
<dbReference type="KEGG" id="pmt:PMT_1955"/>
<dbReference type="eggNOG" id="COG0236">
    <property type="taxonomic scope" value="Bacteria"/>
</dbReference>
<dbReference type="HOGENOM" id="CLU_108696_5_1_3"/>
<dbReference type="OrthoDB" id="9804551at2"/>
<dbReference type="UniPathway" id="UPA00094"/>
<dbReference type="Proteomes" id="UP000001423">
    <property type="component" value="Chromosome"/>
</dbReference>
<dbReference type="GO" id="GO:0005829">
    <property type="term" value="C:cytosol"/>
    <property type="evidence" value="ECO:0007669"/>
    <property type="project" value="TreeGrafter"/>
</dbReference>
<dbReference type="GO" id="GO:0016020">
    <property type="term" value="C:membrane"/>
    <property type="evidence" value="ECO:0007669"/>
    <property type="project" value="GOC"/>
</dbReference>
<dbReference type="GO" id="GO:0000035">
    <property type="term" value="F:acyl binding"/>
    <property type="evidence" value="ECO:0007669"/>
    <property type="project" value="TreeGrafter"/>
</dbReference>
<dbReference type="GO" id="GO:0000036">
    <property type="term" value="F:acyl carrier activity"/>
    <property type="evidence" value="ECO:0007669"/>
    <property type="project" value="UniProtKB-UniRule"/>
</dbReference>
<dbReference type="GO" id="GO:0009245">
    <property type="term" value="P:lipid A biosynthetic process"/>
    <property type="evidence" value="ECO:0007669"/>
    <property type="project" value="TreeGrafter"/>
</dbReference>
<dbReference type="FunFam" id="1.10.1200.10:FF:000006">
    <property type="entry name" value="Acyl carrier protein"/>
    <property type="match status" value="1"/>
</dbReference>
<dbReference type="Gene3D" id="1.10.1200.10">
    <property type="entry name" value="ACP-like"/>
    <property type="match status" value="1"/>
</dbReference>
<dbReference type="HAMAP" id="MF_01217">
    <property type="entry name" value="Acyl_carrier"/>
    <property type="match status" value="1"/>
</dbReference>
<dbReference type="InterPro" id="IPR003231">
    <property type="entry name" value="ACP"/>
</dbReference>
<dbReference type="InterPro" id="IPR036736">
    <property type="entry name" value="ACP-like_sf"/>
</dbReference>
<dbReference type="InterPro" id="IPR009081">
    <property type="entry name" value="PP-bd_ACP"/>
</dbReference>
<dbReference type="InterPro" id="IPR006162">
    <property type="entry name" value="Ppantetheine_attach_site"/>
</dbReference>
<dbReference type="NCBIfam" id="TIGR00517">
    <property type="entry name" value="acyl_carrier"/>
    <property type="match status" value="1"/>
</dbReference>
<dbReference type="NCBIfam" id="NF002148">
    <property type="entry name" value="PRK00982.1-2"/>
    <property type="match status" value="1"/>
</dbReference>
<dbReference type="NCBIfam" id="NF002149">
    <property type="entry name" value="PRK00982.1-3"/>
    <property type="match status" value="1"/>
</dbReference>
<dbReference type="NCBIfam" id="NF002150">
    <property type="entry name" value="PRK00982.1-4"/>
    <property type="match status" value="1"/>
</dbReference>
<dbReference type="NCBIfam" id="NF002151">
    <property type="entry name" value="PRK00982.1-5"/>
    <property type="match status" value="1"/>
</dbReference>
<dbReference type="NCBIfam" id="NF009104">
    <property type="entry name" value="PRK12449.1"/>
    <property type="match status" value="1"/>
</dbReference>
<dbReference type="PANTHER" id="PTHR20863">
    <property type="entry name" value="ACYL CARRIER PROTEIN"/>
    <property type="match status" value="1"/>
</dbReference>
<dbReference type="PANTHER" id="PTHR20863:SF76">
    <property type="entry name" value="CARRIER DOMAIN-CONTAINING PROTEIN"/>
    <property type="match status" value="1"/>
</dbReference>
<dbReference type="Pfam" id="PF00550">
    <property type="entry name" value="PP-binding"/>
    <property type="match status" value="1"/>
</dbReference>
<dbReference type="SUPFAM" id="SSF47336">
    <property type="entry name" value="ACP-like"/>
    <property type="match status" value="1"/>
</dbReference>
<dbReference type="PROSITE" id="PS50075">
    <property type="entry name" value="CARRIER"/>
    <property type="match status" value="1"/>
</dbReference>
<dbReference type="PROSITE" id="PS00012">
    <property type="entry name" value="PHOSPHOPANTETHEINE"/>
    <property type="match status" value="1"/>
</dbReference>